<reference key="1">
    <citation type="journal article" date="1990" name="Curr. Top. Microbiol. Immunol.">
        <title>Analysis of the protein-coding content of the sequence of human cytomegalovirus strain AD169.</title>
        <authorList>
            <person name="Chee M.S."/>
            <person name="Bankier A.T."/>
            <person name="Beck S."/>
            <person name="Bohni R."/>
            <person name="Brown C.M."/>
            <person name="Cerny R."/>
            <person name="Horsnell T."/>
            <person name="Hutchison C.A. III"/>
            <person name="Kouzarides T."/>
            <person name="Martignetti J.A."/>
            <person name="Preddie E."/>
            <person name="Satchwell S.C."/>
            <person name="Tomlinson P."/>
            <person name="Weston K.M."/>
            <person name="Barrell B.G."/>
        </authorList>
    </citation>
    <scope>NUCLEOTIDE SEQUENCE [LARGE SCALE GENOMIC DNA]</scope>
</reference>
<reference key="2">
    <citation type="journal article" date="2003" name="J. Gen. Virol.">
        <title>The human cytomegalovirus genome revisited: comparison with the chimpanzee cytomegalovirus genome.</title>
        <authorList>
            <person name="Davison A.J."/>
            <person name="Dolan A."/>
            <person name="Akter P."/>
            <person name="Addison C."/>
            <person name="Dargan D.J."/>
            <person name="Alcendor D.J."/>
            <person name="McGeoch D.J."/>
            <person name="Hayward G.S."/>
        </authorList>
    </citation>
    <scope>GENOME REANNOTATION</scope>
</reference>
<reference key="3">
    <citation type="journal article" date="2003" name="J. Gen. Virol.">
        <authorList>
            <person name="Davison A.J."/>
            <person name="Dolan A."/>
            <person name="Akter P."/>
            <person name="Addison C."/>
            <person name="Dargan D.J."/>
            <person name="Alcendor D.J."/>
            <person name="McGeoch D.J."/>
            <person name="Hayward G.S."/>
        </authorList>
    </citation>
    <scope>ERRATUM OF PUBMED:12533697</scope>
</reference>
<comment type="similarity">
    <text evidence="1">Belongs to the HHV-5 UL30 protein family.</text>
</comment>
<name>UL30_HCMVA</name>
<evidence type="ECO:0000305" key="1"/>
<dbReference type="EMBL" id="X17403">
    <property type="protein sequence ID" value="CAA35429.1"/>
    <property type="molecule type" value="Genomic_DNA"/>
</dbReference>
<dbReference type="EMBL" id="BK000394">
    <property type="protein sequence ID" value="DAA00135.1"/>
    <property type="molecule type" value="Genomic_DNA"/>
</dbReference>
<dbReference type="PIR" id="S09793">
    <property type="entry name" value="S09793"/>
</dbReference>
<dbReference type="Proteomes" id="UP000008991">
    <property type="component" value="Segment"/>
</dbReference>
<dbReference type="Proteomes" id="UP000008992">
    <property type="component" value="Segment"/>
</dbReference>
<sequence>MTTSAMTAPDTRRQLQHVETLRRFLRGDSCFVHDLRGMMDYHDGLSRRQQRAFCRASRVLTDPEPIQSEAEGENKQFTEHTHKVVSFFIKSVFVFPYLVLPNCCQVSVDRSRVPETGGRWL</sequence>
<protein>
    <recommendedName>
        <fullName>Uncharacterized protein UL30</fullName>
    </recommendedName>
</protein>
<feature type="chain" id="PRO_0000115316" description="Uncharacterized protein UL30">
    <location>
        <begin position="1"/>
        <end position="121"/>
    </location>
</feature>
<keyword id="KW-1185">Reference proteome</keyword>
<accession>P16765</accession>
<accession>Q7M6Q3</accession>
<proteinExistence type="inferred from homology"/>
<gene>
    <name type="primary">UL30</name>
</gene>
<organism>
    <name type="scientific">Human cytomegalovirus (strain AD169)</name>
    <name type="common">HHV-5</name>
    <name type="synonym">Human herpesvirus 5</name>
    <dbReference type="NCBI Taxonomy" id="10360"/>
    <lineage>
        <taxon>Viruses</taxon>
        <taxon>Duplodnaviria</taxon>
        <taxon>Heunggongvirae</taxon>
        <taxon>Peploviricota</taxon>
        <taxon>Herviviricetes</taxon>
        <taxon>Herpesvirales</taxon>
        <taxon>Orthoherpesviridae</taxon>
        <taxon>Betaherpesvirinae</taxon>
        <taxon>Cytomegalovirus</taxon>
        <taxon>Cytomegalovirus humanbeta5</taxon>
        <taxon>Human cytomegalovirus</taxon>
    </lineage>
</organism>
<organismHost>
    <name type="scientific">Homo sapiens</name>
    <name type="common">Human</name>
    <dbReference type="NCBI Taxonomy" id="9606"/>
</organismHost>